<protein>
    <recommendedName>
        <fullName>Hemoglobin subunit alpha</fullName>
    </recommendedName>
    <alternativeName>
        <fullName>Alpha-globin aa1</fullName>
    </alternativeName>
    <alternativeName>
        <fullName>Hemoglobin alpha chain</fullName>
    </alternativeName>
</protein>
<proteinExistence type="evidence at transcript level"/>
<gene>
    <name type="primary">hbaa1</name>
</gene>
<name>HBA_DANRE</name>
<feature type="initiator methionine" description="Removed" evidence="1">
    <location>
        <position position="1"/>
    </location>
</feature>
<feature type="chain" id="PRO_0000052585" description="Hemoglobin subunit alpha">
    <location>
        <begin position="2"/>
        <end position="143"/>
    </location>
</feature>
<feature type="domain" description="Globin" evidence="2">
    <location>
        <begin position="2"/>
        <end position="143"/>
    </location>
</feature>
<feature type="binding site" evidence="2">
    <location>
        <position position="60"/>
    </location>
    <ligand>
        <name>O2</name>
        <dbReference type="ChEBI" id="CHEBI:15379"/>
    </ligand>
</feature>
<feature type="binding site" description="proximal binding residue" evidence="2">
    <location>
        <position position="89"/>
    </location>
    <ligand>
        <name>heme b</name>
        <dbReference type="ChEBI" id="CHEBI:60344"/>
    </ligand>
    <ligandPart>
        <name>Fe</name>
        <dbReference type="ChEBI" id="CHEBI:18248"/>
    </ligandPart>
</feature>
<feature type="modified residue" description="N-acetylserine" evidence="1">
    <location>
        <position position="2"/>
    </location>
</feature>
<sequence>MSLSDTDKAVVKAIWAKISPKADEIGAEALARMLTVYPQTKTYFSHWADLSPGSGPVKKHGKTIMGAVGEAISKIDDLVGGLAALSELHAFKLRVDPANFKILSHNVIVVIAMLFPADFTPEVHVSVDKFFNNLALALSEKYR</sequence>
<reference key="1">
    <citation type="submission" date="1996-02" db="EMBL/GenBank/DDBJ databases">
        <authorList>
            <person name="Zon L."/>
        </authorList>
    </citation>
    <scope>NUCLEOTIDE SEQUENCE [GENOMIC DNA / MRNA]</scope>
</reference>
<reference key="2">
    <citation type="journal article" date="2013" name="Nature">
        <title>The zebrafish reference genome sequence and its relationship to the human genome.</title>
        <authorList>
            <person name="Howe K."/>
            <person name="Clark M.D."/>
            <person name="Torroja C.F."/>
            <person name="Torrance J."/>
            <person name="Berthelot C."/>
            <person name="Muffato M."/>
            <person name="Collins J.E."/>
            <person name="Humphray S."/>
            <person name="McLaren K."/>
            <person name="Matthews L."/>
            <person name="McLaren S."/>
            <person name="Sealy I."/>
            <person name="Caccamo M."/>
            <person name="Churcher C."/>
            <person name="Scott C."/>
            <person name="Barrett J.C."/>
            <person name="Koch R."/>
            <person name="Rauch G.J."/>
            <person name="White S."/>
            <person name="Chow W."/>
            <person name="Kilian B."/>
            <person name="Quintais L.T."/>
            <person name="Guerra-Assuncao J.A."/>
            <person name="Zhou Y."/>
            <person name="Gu Y."/>
            <person name="Yen J."/>
            <person name="Vogel J.H."/>
            <person name="Eyre T."/>
            <person name="Redmond S."/>
            <person name="Banerjee R."/>
            <person name="Chi J."/>
            <person name="Fu B."/>
            <person name="Langley E."/>
            <person name="Maguire S.F."/>
            <person name="Laird G.K."/>
            <person name="Lloyd D."/>
            <person name="Kenyon E."/>
            <person name="Donaldson S."/>
            <person name="Sehra H."/>
            <person name="Almeida-King J."/>
            <person name="Loveland J."/>
            <person name="Trevanion S."/>
            <person name="Jones M."/>
            <person name="Quail M."/>
            <person name="Willey D."/>
            <person name="Hunt A."/>
            <person name="Burton J."/>
            <person name="Sims S."/>
            <person name="McLay K."/>
            <person name="Plumb B."/>
            <person name="Davis J."/>
            <person name="Clee C."/>
            <person name="Oliver K."/>
            <person name="Clark R."/>
            <person name="Riddle C."/>
            <person name="Elliot D."/>
            <person name="Threadgold G."/>
            <person name="Harden G."/>
            <person name="Ware D."/>
            <person name="Begum S."/>
            <person name="Mortimore B."/>
            <person name="Kerry G."/>
            <person name="Heath P."/>
            <person name="Phillimore B."/>
            <person name="Tracey A."/>
            <person name="Corby N."/>
            <person name="Dunn M."/>
            <person name="Johnson C."/>
            <person name="Wood J."/>
            <person name="Clark S."/>
            <person name="Pelan S."/>
            <person name="Griffiths G."/>
            <person name="Smith M."/>
            <person name="Glithero R."/>
            <person name="Howden P."/>
            <person name="Barker N."/>
            <person name="Lloyd C."/>
            <person name="Stevens C."/>
            <person name="Harley J."/>
            <person name="Holt K."/>
            <person name="Panagiotidis G."/>
            <person name="Lovell J."/>
            <person name="Beasley H."/>
            <person name="Henderson C."/>
            <person name="Gordon D."/>
            <person name="Auger K."/>
            <person name="Wright D."/>
            <person name="Collins J."/>
            <person name="Raisen C."/>
            <person name="Dyer L."/>
            <person name="Leung K."/>
            <person name="Robertson L."/>
            <person name="Ambridge K."/>
            <person name="Leongamornlert D."/>
            <person name="McGuire S."/>
            <person name="Gilderthorp R."/>
            <person name="Griffiths C."/>
            <person name="Manthravadi D."/>
            <person name="Nichol S."/>
            <person name="Barker G."/>
            <person name="Whitehead S."/>
            <person name="Kay M."/>
            <person name="Brown J."/>
            <person name="Murnane C."/>
            <person name="Gray E."/>
            <person name="Humphries M."/>
            <person name="Sycamore N."/>
            <person name="Barker D."/>
            <person name="Saunders D."/>
            <person name="Wallis J."/>
            <person name="Babbage A."/>
            <person name="Hammond S."/>
            <person name="Mashreghi-Mohammadi M."/>
            <person name="Barr L."/>
            <person name="Martin S."/>
            <person name="Wray P."/>
            <person name="Ellington A."/>
            <person name="Matthews N."/>
            <person name="Ellwood M."/>
            <person name="Woodmansey R."/>
            <person name="Clark G."/>
            <person name="Cooper J."/>
            <person name="Tromans A."/>
            <person name="Grafham D."/>
            <person name="Skuce C."/>
            <person name="Pandian R."/>
            <person name="Andrews R."/>
            <person name="Harrison E."/>
            <person name="Kimberley A."/>
            <person name="Garnett J."/>
            <person name="Fosker N."/>
            <person name="Hall R."/>
            <person name="Garner P."/>
            <person name="Kelly D."/>
            <person name="Bird C."/>
            <person name="Palmer S."/>
            <person name="Gehring I."/>
            <person name="Berger A."/>
            <person name="Dooley C.M."/>
            <person name="Ersan-Urun Z."/>
            <person name="Eser C."/>
            <person name="Geiger H."/>
            <person name="Geisler M."/>
            <person name="Karotki L."/>
            <person name="Kirn A."/>
            <person name="Konantz J."/>
            <person name="Konantz M."/>
            <person name="Oberlander M."/>
            <person name="Rudolph-Geiger S."/>
            <person name="Teucke M."/>
            <person name="Lanz C."/>
            <person name="Raddatz G."/>
            <person name="Osoegawa K."/>
            <person name="Zhu B."/>
            <person name="Rapp A."/>
            <person name="Widaa S."/>
            <person name="Langford C."/>
            <person name="Yang F."/>
            <person name="Schuster S.C."/>
            <person name="Carter N.P."/>
            <person name="Harrow J."/>
            <person name="Ning Z."/>
            <person name="Herrero J."/>
            <person name="Searle S.M."/>
            <person name="Enright A."/>
            <person name="Geisler R."/>
            <person name="Plasterk R.H."/>
            <person name="Lee C."/>
            <person name="Westerfield M."/>
            <person name="de Jong P.J."/>
            <person name="Zon L.I."/>
            <person name="Postlethwait J.H."/>
            <person name="Nusslein-Volhard C."/>
            <person name="Hubbard T.J."/>
            <person name="Roest Crollius H."/>
            <person name="Rogers J."/>
            <person name="Stemple D.L."/>
        </authorList>
    </citation>
    <scope>NUCLEOTIDE SEQUENCE [LARGE SCALE GENOMIC DNA]</scope>
    <source>
        <strain>Tuebingen</strain>
    </source>
</reference>
<keyword id="KW-0007">Acetylation</keyword>
<keyword id="KW-0349">Heme</keyword>
<keyword id="KW-0408">Iron</keyword>
<keyword id="KW-0479">Metal-binding</keyword>
<keyword id="KW-0561">Oxygen transport</keyword>
<keyword id="KW-1185">Reference proteome</keyword>
<keyword id="KW-0813">Transport</keyword>
<evidence type="ECO:0000250" key="1"/>
<evidence type="ECO:0000255" key="2">
    <source>
        <dbReference type="PROSITE-ProRule" id="PRU00238"/>
    </source>
</evidence>
<comment type="function">
    <text>Involved in oxygen transport from gills to the various peripheral tissues.</text>
</comment>
<comment type="subunit">
    <text>Heterotetramer of two alpha chains and two beta chains.</text>
</comment>
<comment type="tissue specificity">
    <text>Red blood cells.</text>
</comment>
<comment type="similarity">
    <text evidence="2">Belongs to the globin family.</text>
</comment>
<dbReference type="EMBL" id="U50381">
    <property type="protein sequence ID" value="AAB05404.1"/>
    <property type="molecule type" value="Genomic_DNA"/>
</dbReference>
<dbReference type="EMBL" id="U50382">
    <property type="protein sequence ID" value="AAB05406.1"/>
    <property type="molecule type" value="Genomic_DNA"/>
</dbReference>
<dbReference type="EMBL" id="AL929176">
    <property type="protein sequence ID" value="CAE48986.1"/>
    <property type="molecule type" value="Genomic_DNA"/>
</dbReference>
<dbReference type="RefSeq" id="NP_571332.2">
    <property type="nucleotide sequence ID" value="NM_131257.2"/>
</dbReference>
<dbReference type="SMR" id="Q90487"/>
<dbReference type="FunCoup" id="Q90487">
    <property type="interactions" value="274"/>
</dbReference>
<dbReference type="STRING" id="7955.ENSDARP00000101541"/>
<dbReference type="PaxDb" id="7955-ENSDARP00000101541"/>
<dbReference type="Ensembl" id="ENSDART00000113098">
    <property type="protein sequence ID" value="ENSDARP00000101541"/>
    <property type="gene ID" value="ENSDARG00000097011"/>
</dbReference>
<dbReference type="GeneID" id="30507"/>
<dbReference type="KEGG" id="dre:30507"/>
<dbReference type="AGR" id="ZFIN:ZDB-GENE-980526-79"/>
<dbReference type="CTD" id="30507"/>
<dbReference type="ZFIN" id="ZDB-GENE-980526-79">
    <property type="gene designation" value="hbaa1"/>
</dbReference>
<dbReference type="eggNOG" id="KOG3378">
    <property type="taxonomic scope" value="Eukaryota"/>
</dbReference>
<dbReference type="HOGENOM" id="CLU_003827_10_2_1"/>
<dbReference type="InParanoid" id="Q90487"/>
<dbReference type="OMA" id="HEHAQNS"/>
<dbReference type="OrthoDB" id="8751793at2759"/>
<dbReference type="PhylomeDB" id="Q90487"/>
<dbReference type="TreeFam" id="TF332328"/>
<dbReference type="PRO" id="PR:Q90487"/>
<dbReference type="Proteomes" id="UP000000437">
    <property type="component" value="Chromosome 3"/>
</dbReference>
<dbReference type="Bgee" id="ENSDARG00000097011">
    <property type="expression patterns" value="Expressed in spleen and 21 other cell types or tissues"/>
</dbReference>
<dbReference type="ExpressionAtlas" id="Q90487">
    <property type="expression patterns" value="differential"/>
</dbReference>
<dbReference type="GO" id="GO:0031838">
    <property type="term" value="C:haptoglobin-hemoglobin complex"/>
    <property type="evidence" value="ECO:0000318"/>
    <property type="project" value="GO_Central"/>
</dbReference>
<dbReference type="GO" id="GO:0005833">
    <property type="term" value="C:hemoglobin complex"/>
    <property type="evidence" value="ECO:0000318"/>
    <property type="project" value="GO_Central"/>
</dbReference>
<dbReference type="GO" id="GO:0020037">
    <property type="term" value="F:heme binding"/>
    <property type="evidence" value="ECO:0000318"/>
    <property type="project" value="GO_Central"/>
</dbReference>
<dbReference type="GO" id="GO:0005506">
    <property type="term" value="F:iron ion binding"/>
    <property type="evidence" value="ECO:0007669"/>
    <property type="project" value="InterPro"/>
</dbReference>
<dbReference type="GO" id="GO:0019825">
    <property type="term" value="F:oxygen binding"/>
    <property type="evidence" value="ECO:0000318"/>
    <property type="project" value="GO_Central"/>
</dbReference>
<dbReference type="GO" id="GO:0005344">
    <property type="term" value="F:oxygen carrier activity"/>
    <property type="evidence" value="ECO:0000318"/>
    <property type="project" value="GO_Central"/>
</dbReference>
<dbReference type="GO" id="GO:0098869">
    <property type="term" value="P:cellular oxidant detoxification"/>
    <property type="evidence" value="ECO:0007669"/>
    <property type="project" value="GOC"/>
</dbReference>
<dbReference type="GO" id="GO:0030097">
    <property type="term" value="P:hemopoiesis"/>
    <property type="evidence" value="ECO:0000303"/>
    <property type="project" value="UniProtKB"/>
</dbReference>
<dbReference type="GO" id="GO:0042744">
    <property type="term" value="P:hydrogen peroxide catabolic process"/>
    <property type="evidence" value="ECO:0000318"/>
    <property type="project" value="GO_Central"/>
</dbReference>
<dbReference type="GO" id="GO:0001666">
    <property type="term" value="P:response to hypoxia"/>
    <property type="evidence" value="ECO:0000314"/>
    <property type="project" value="ZFIN"/>
</dbReference>
<dbReference type="CDD" id="cd08927">
    <property type="entry name" value="Hb-alpha-like"/>
    <property type="match status" value="1"/>
</dbReference>
<dbReference type="FunFam" id="1.10.490.10:FF:000002">
    <property type="entry name" value="Hemoglobin subunit alpha"/>
    <property type="match status" value="1"/>
</dbReference>
<dbReference type="Gene3D" id="1.10.490.10">
    <property type="entry name" value="Globins"/>
    <property type="match status" value="1"/>
</dbReference>
<dbReference type="InterPro" id="IPR000971">
    <property type="entry name" value="Globin"/>
</dbReference>
<dbReference type="InterPro" id="IPR009050">
    <property type="entry name" value="Globin-like_sf"/>
</dbReference>
<dbReference type="InterPro" id="IPR012292">
    <property type="entry name" value="Globin/Proto"/>
</dbReference>
<dbReference type="InterPro" id="IPR002338">
    <property type="entry name" value="Hemoglobin_a-typ"/>
</dbReference>
<dbReference type="InterPro" id="IPR050056">
    <property type="entry name" value="Hemoglobin_oxygen_transport"/>
</dbReference>
<dbReference type="InterPro" id="IPR002339">
    <property type="entry name" value="Hemoglobin_pi"/>
</dbReference>
<dbReference type="PANTHER" id="PTHR11442:SF93">
    <property type="entry name" value="ALPHA GLOBIN-LIKE-RELATED"/>
    <property type="match status" value="1"/>
</dbReference>
<dbReference type="PANTHER" id="PTHR11442">
    <property type="entry name" value="HEMOGLOBIN FAMILY MEMBER"/>
    <property type="match status" value="1"/>
</dbReference>
<dbReference type="Pfam" id="PF00042">
    <property type="entry name" value="Globin"/>
    <property type="match status" value="1"/>
</dbReference>
<dbReference type="PRINTS" id="PR00612">
    <property type="entry name" value="ALPHAHAEM"/>
</dbReference>
<dbReference type="PRINTS" id="PR00815">
    <property type="entry name" value="PIHAEM"/>
</dbReference>
<dbReference type="SUPFAM" id="SSF46458">
    <property type="entry name" value="Globin-like"/>
    <property type="match status" value="1"/>
</dbReference>
<dbReference type="PROSITE" id="PS01033">
    <property type="entry name" value="GLOBIN"/>
    <property type="match status" value="1"/>
</dbReference>
<organism>
    <name type="scientific">Danio rerio</name>
    <name type="common">Zebrafish</name>
    <name type="synonym">Brachydanio rerio</name>
    <dbReference type="NCBI Taxonomy" id="7955"/>
    <lineage>
        <taxon>Eukaryota</taxon>
        <taxon>Metazoa</taxon>
        <taxon>Chordata</taxon>
        <taxon>Craniata</taxon>
        <taxon>Vertebrata</taxon>
        <taxon>Euteleostomi</taxon>
        <taxon>Actinopterygii</taxon>
        <taxon>Neopterygii</taxon>
        <taxon>Teleostei</taxon>
        <taxon>Ostariophysi</taxon>
        <taxon>Cypriniformes</taxon>
        <taxon>Danionidae</taxon>
        <taxon>Danioninae</taxon>
        <taxon>Danio</taxon>
    </lineage>
</organism>
<accession>Q90487</accession>